<sequence length="399" mass="43559">MIIKPKIRGFICTTAHPAGCEANVREQIAYVKSRGELKNGPKKVLVIGASTGYGLASRINAAFGSGAATIGVFFEKPGSEAKTGSAGWYNSAGFDKAAKEEGLYAKSVNGDAFSNECRQTVIDLIKQDLGQIDMVVYSLASPVRKMPETGEVVRSALKPIGEPYKSVALDTNKDVLVEAVVEPANEQEIADTVKVMGGQDWQLWMDALEEAGVLADNVQAVAYSYIGTDLTWPIYWHGTLGKAKEDLDRAALAIDQKLKAKGGAAYVAVLKSVVTQASSAIPVMPLYISIVFKIMKAQGIHEGCIEQIQRLFATKLYSGTAPDTDEKHRLRLDDWELRDDVQNTCREIWAQINDNNINELTDYLGYKAEFLRLFGFGLQGVDYEADLSGEVKFDVVELV</sequence>
<keyword id="KW-0275">Fatty acid biosynthesis</keyword>
<keyword id="KW-0276">Fatty acid metabolism</keyword>
<keyword id="KW-0444">Lipid biosynthesis</keyword>
<keyword id="KW-0443">Lipid metabolism</keyword>
<keyword id="KW-0520">NAD</keyword>
<keyword id="KW-0560">Oxidoreductase</keyword>
<dbReference type="EC" id="1.3.1.9" evidence="1"/>
<dbReference type="EMBL" id="CP000826">
    <property type="protein sequence ID" value="ABV41052.1"/>
    <property type="molecule type" value="Genomic_DNA"/>
</dbReference>
<dbReference type="SMR" id="A8GD62"/>
<dbReference type="STRING" id="399741.Spro_1949"/>
<dbReference type="KEGG" id="spe:Spro_1949"/>
<dbReference type="eggNOG" id="COG3007">
    <property type="taxonomic scope" value="Bacteria"/>
</dbReference>
<dbReference type="HOGENOM" id="CLU_057698_1_0_6"/>
<dbReference type="OrthoDB" id="9802260at2"/>
<dbReference type="UniPathway" id="UPA00094"/>
<dbReference type="GO" id="GO:0004318">
    <property type="term" value="F:enoyl-[acyl-carrier-protein] reductase (NADH) activity"/>
    <property type="evidence" value="ECO:0007669"/>
    <property type="project" value="UniProtKB-UniRule"/>
</dbReference>
<dbReference type="GO" id="GO:0051287">
    <property type="term" value="F:NAD binding"/>
    <property type="evidence" value="ECO:0007669"/>
    <property type="project" value="UniProtKB-UniRule"/>
</dbReference>
<dbReference type="GO" id="GO:0050343">
    <property type="term" value="F:trans-2-enoyl-CoA reductase (NADH) activity"/>
    <property type="evidence" value="ECO:0007669"/>
    <property type="project" value="TreeGrafter"/>
</dbReference>
<dbReference type="GO" id="GO:0006633">
    <property type="term" value="P:fatty acid biosynthetic process"/>
    <property type="evidence" value="ECO:0007669"/>
    <property type="project" value="UniProtKB-UniRule"/>
</dbReference>
<dbReference type="FunFam" id="3.40.50.720:FF:000221">
    <property type="entry name" value="Enoyl-[acyl-carrier-protein] reductase [NADH]"/>
    <property type="match status" value="1"/>
</dbReference>
<dbReference type="Gene3D" id="3.40.50.720">
    <property type="entry name" value="NAD(P)-binding Rossmann-like Domain"/>
    <property type="match status" value="1"/>
</dbReference>
<dbReference type="HAMAP" id="MF_01838">
    <property type="entry name" value="FabV_reductase"/>
    <property type="match status" value="1"/>
</dbReference>
<dbReference type="InterPro" id="IPR024906">
    <property type="entry name" value="Eno_Rdtase_FAD-bd_dom"/>
</dbReference>
<dbReference type="InterPro" id="IPR024910">
    <property type="entry name" value="Enoyl-CoA_Rdtase_cat_dom"/>
</dbReference>
<dbReference type="InterPro" id="IPR050048">
    <property type="entry name" value="FabV-like_NADH_b"/>
</dbReference>
<dbReference type="InterPro" id="IPR010758">
    <property type="entry name" value="Trans-2-enoyl-CoA_reductase"/>
</dbReference>
<dbReference type="NCBIfam" id="NF043048">
    <property type="entry name" value="EnoyACPredFabV"/>
    <property type="match status" value="1"/>
</dbReference>
<dbReference type="NCBIfam" id="NF010177">
    <property type="entry name" value="PRK13656.1"/>
    <property type="match status" value="1"/>
</dbReference>
<dbReference type="PANTHER" id="PTHR37480">
    <property type="entry name" value="ENOYL-[ACYL-CARRIER-PROTEIN] REDUCTASE [NADH]"/>
    <property type="match status" value="1"/>
</dbReference>
<dbReference type="PANTHER" id="PTHR37480:SF1">
    <property type="entry name" value="ENOYL-[ACYL-CARRIER-PROTEIN] REDUCTASE [NADH]"/>
    <property type="match status" value="1"/>
</dbReference>
<dbReference type="Pfam" id="PF07055">
    <property type="entry name" value="Eno-Rase_FAD_bd"/>
    <property type="match status" value="1"/>
</dbReference>
<dbReference type="Pfam" id="PF12242">
    <property type="entry name" value="Eno-Rase_NADH_b"/>
    <property type="match status" value="1"/>
</dbReference>
<dbReference type="Pfam" id="PF12241">
    <property type="entry name" value="Enoyl_reductase"/>
    <property type="match status" value="1"/>
</dbReference>
<evidence type="ECO:0000255" key="1">
    <source>
        <dbReference type="HAMAP-Rule" id="MF_01838"/>
    </source>
</evidence>
<comment type="function">
    <text evidence="1">Involved in the final reduction of the elongation cycle of fatty acid synthesis (FAS II). Catalyzes the reduction of a carbon-carbon double bond in an enoyl moiety that is covalently linked to an acyl carrier protein (ACP).</text>
</comment>
<comment type="catalytic activity">
    <reaction evidence="1">
        <text>a 2,3-saturated acyl-[ACP] + NAD(+) = a (2E)-enoyl-[ACP] + NADH + H(+)</text>
        <dbReference type="Rhea" id="RHEA:10240"/>
        <dbReference type="Rhea" id="RHEA-COMP:9925"/>
        <dbReference type="Rhea" id="RHEA-COMP:9926"/>
        <dbReference type="ChEBI" id="CHEBI:15378"/>
        <dbReference type="ChEBI" id="CHEBI:57540"/>
        <dbReference type="ChEBI" id="CHEBI:57945"/>
        <dbReference type="ChEBI" id="CHEBI:78784"/>
        <dbReference type="ChEBI" id="CHEBI:78785"/>
        <dbReference type="EC" id="1.3.1.9"/>
    </reaction>
</comment>
<comment type="pathway">
    <text evidence="1">Lipid metabolism; fatty acid biosynthesis.</text>
</comment>
<comment type="subunit">
    <text evidence="1">Monomer.</text>
</comment>
<comment type="similarity">
    <text evidence="1">Belongs to the TER reductase family.</text>
</comment>
<gene>
    <name evidence="1" type="primary">fabV</name>
    <name type="ordered locus">Spro_1949</name>
</gene>
<feature type="chain" id="PRO_1000070494" description="Enoyl-[acyl-carrier-protein] reductase [NADH]">
    <location>
        <begin position="1"/>
        <end position="399"/>
    </location>
</feature>
<feature type="active site" description="Proton donor" evidence="1">
    <location>
        <position position="235"/>
    </location>
</feature>
<feature type="binding site" evidence="1">
    <location>
        <begin position="48"/>
        <end position="53"/>
    </location>
    <ligand>
        <name>NAD(+)</name>
        <dbReference type="ChEBI" id="CHEBI:57540"/>
    </ligand>
</feature>
<feature type="binding site" evidence="1">
    <location>
        <begin position="74"/>
        <end position="75"/>
    </location>
    <ligand>
        <name>NAD(+)</name>
        <dbReference type="ChEBI" id="CHEBI:57540"/>
    </ligand>
</feature>
<feature type="binding site" evidence="1">
    <location>
        <begin position="111"/>
        <end position="112"/>
    </location>
    <ligand>
        <name>NAD(+)</name>
        <dbReference type="ChEBI" id="CHEBI:57540"/>
    </ligand>
</feature>
<feature type="binding site" evidence="1">
    <location>
        <begin position="139"/>
        <end position="140"/>
    </location>
    <ligand>
        <name>NAD(+)</name>
        <dbReference type="ChEBI" id="CHEBI:57540"/>
    </ligand>
</feature>
<feature type="binding site" evidence="1">
    <location>
        <position position="225"/>
    </location>
    <ligand>
        <name>substrate</name>
    </ligand>
</feature>
<feature type="binding site" evidence="1">
    <location>
        <position position="244"/>
    </location>
    <ligand>
        <name>NAD(+)</name>
        <dbReference type="ChEBI" id="CHEBI:57540"/>
    </ligand>
</feature>
<feature type="binding site" evidence="1">
    <location>
        <begin position="273"/>
        <end position="275"/>
    </location>
    <ligand>
        <name>NAD(+)</name>
        <dbReference type="ChEBI" id="CHEBI:57540"/>
    </ligand>
</feature>
<feature type="site" description="Plays an important role in discriminating NADH against NADPH" evidence="1">
    <location>
        <position position="75"/>
    </location>
</feature>
<proteinExistence type="inferred from homology"/>
<protein>
    <recommendedName>
        <fullName evidence="1">Enoyl-[acyl-carrier-protein] reductase [NADH]</fullName>
        <shortName evidence="1">ENR</shortName>
        <ecNumber evidence="1">1.3.1.9</ecNumber>
    </recommendedName>
</protein>
<accession>A8GD62</accession>
<reference key="1">
    <citation type="submission" date="2007-09" db="EMBL/GenBank/DDBJ databases">
        <title>Complete sequence of chromosome of Serratia proteamaculans 568.</title>
        <authorList>
            <consortium name="US DOE Joint Genome Institute"/>
            <person name="Copeland A."/>
            <person name="Lucas S."/>
            <person name="Lapidus A."/>
            <person name="Barry K."/>
            <person name="Glavina del Rio T."/>
            <person name="Dalin E."/>
            <person name="Tice H."/>
            <person name="Pitluck S."/>
            <person name="Chain P."/>
            <person name="Malfatti S."/>
            <person name="Shin M."/>
            <person name="Vergez L."/>
            <person name="Schmutz J."/>
            <person name="Larimer F."/>
            <person name="Land M."/>
            <person name="Hauser L."/>
            <person name="Kyrpides N."/>
            <person name="Kim E."/>
            <person name="Taghavi S."/>
            <person name="Newman L."/>
            <person name="Vangronsveld J."/>
            <person name="van der Lelie D."/>
            <person name="Richardson P."/>
        </authorList>
    </citation>
    <scope>NUCLEOTIDE SEQUENCE [LARGE SCALE GENOMIC DNA]</scope>
    <source>
        <strain>568</strain>
    </source>
</reference>
<organism>
    <name type="scientific">Serratia proteamaculans (strain 568)</name>
    <dbReference type="NCBI Taxonomy" id="399741"/>
    <lineage>
        <taxon>Bacteria</taxon>
        <taxon>Pseudomonadati</taxon>
        <taxon>Pseudomonadota</taxon>
        <taxon>Gammaproteobacteria</taxon>
        <taxon>Enterobacterales</taxon>
        <taxon>Yersiniaceae</taxon>
        <taxon>Serratia</taxon>
    </lineage>
</organism>
<name>FABV_SERP5</name>